<protein>
    <recommendedName>
        <fullName>Probable Rho GTPase-activating protein CG5521</fullName>
    </recommendedName>
</protein>
<organism>
    <name type="scientific">Drosophila melanogaster</name>
    <name type="common">Fruit fly</name>
    <dbReference type="NCBI Taxonomy" id="7227"/>
    <lineage>
        <taxon>Eukaryota</taxon>
        <taxon>Metazoa</taxon>
        <taxon>Ecdysozoa</taxon>
        <taxon>Arthropoda</taxon>
        <taxon>Hexapoda</taxon>
        <taxon>Insecta</taxon>
        <taxon>Pterygota</taxon>
        <taxon>Neoptera</taxon>
        <taxon>Endopterygota</taxon>
        <taxon>Diptera</taxon>
        <taxon>Brachycera</taxon>
        <taxon>Muscomorpha</taxon>
        <taxon>Ephydroidea</taxon>
        <taxon>Drosophilidae</taxon>
        <taxon>Drosophila</taxon>
        <taxon>Sophophora</taxon>
    </lineage>
</organism>
<feature type="chain" id="PRO_0000372858" description="Probable Rho GTPase-activating protein CG5521">
    <location>
        <begin position="1"/>
        <end position="1958"/>
    </location>
</feature>
<feature type="domain" description="Rap-GAP" evidence="1">
    <location>
        <begin position="1612"/>
        <end position="1819"/>
    </location>
</feature>
<feature type="region of interest" description="Disordered" evidence="2">
    <location>
        <begin position="1"/>
        <end position="21"/>
    </location>
</feature>
<feature type="region of interest" description="Disordered" evidence="2">
    <location>
        <begin position="400"/>
        <end position="424"/>
    </location>
</feature>
<feature type="region of interest" description="Disordered" evidence="2">
    <location>
        <begin position="635"/>
        <end position="804"/>
    </location>
</feature>
<feature type="region of interest" description="Disordered" evidence="2">
    <location>
        <begin position="1534"/>
        <end position="1568"/>
    </location>
</feature>
<feature type="region of interest" description="Disordered" evidence="2">
    <location>
        <begin position="1903"/>
        <end position="1958"/>
    </location>
</feature>
<feature type="compositionally biased region" description="Pro residues" evidence="2">
    <location>
        <begin position="400"/>
        <end position="414"/>
    </location>
</feature>
<feature type="compositionally biased region" description="Low complexity" evidence="2">
    <location>
        <begin position="640"/>
        <end position="656"/>
    </location>
</feature>
<feature type="compositionally biased region" description="Basic and acidic residues" evidence="2">
    <location>
        <begin position="758"/>
        <end position="774"/>
    </location>
</feature>
<feature type="compositionally biased region" description="Acidic residues" evidence="2">
    <location>
        <begin position="775"/>
        <end position="785"/>
    </location>
</feature>
<feature type="compositionally biased region" description="Polar residues" evidence="2">
    <location>
        <begin position="788"/>
        <end position="800"/>
    </location>
</feature>
<feature type="compositionally biased region" description="Polar residues" evidence="2">
    <location>
        <begin position="1546"/>
        <end position="1568"/>
    </location>
</feature>
<feature type="modified residue" description="Phosphoserine" evidence="4">
    <location>
        <position position="718"/>
    </location>
</feature>
<feature type="modified residue" description="Phosphoserine" evidence="4">
    <location>
        <position position="764"/>
    </location>
</feature>
<feature type="modified residue" description="Phosphoserine" evidence="4">
    <location>
        <position position="767"/>
    </location>
</feature>
<feature type="modified residue" description="Phosphoserine" evidence="4">
    <location>
        <position position="787"/>
    </location>
</feature>
<feature type="modified residue" description="Phosphoserine" evidence="4">
    <location>
        <position position="791"/>
    </location>
</feature>
<feature type="modified residue" description="Phosphoserine" evidence="4">
    <location>
        <position position="793"/>
    </location>
</feature>
<feature type="modified residue" description="Phosphoserine" evidence="4">
    <location>
        <position position="795"/>
    </location>
</feature>
<feature type="modified residue" description="Phosphotyrosine" evidence="3">
    <location>
        <position position="980"/>
    </location>
</feature>
<feature type="modified residue" description="Phosphoserine" evidence="4">
    <location>
        <position position="1551"/>
    </location>
</feature>
<feature type="modified residue" description="Phosphothreonine" evidence="4">
    <location>
        <position position="1945"/>
    </location>
</feature>
<feature type="modified residue" description="Phosphoserine" evidence="4">
    <location>
        <position position="1949"/>
    </location>
</feature>
<feature type="splice variant" id="VSP_037212" description="In isoform 2." evidence="5">
    <original>K</original>
    <variation>KELPFHI</variation>
    <location>
        <position position="72"/>
    </location>
</feature>
<gene>
    <name type="ORF">CG5521</name>
</gene>
<accession>Q9VB98</accession>
<accession>Q058W5</accession>
<proteinExistence type="evidence at protein level"/>
<sequence>MFTKKSHADVKKSTAKLQDSKKDSASRLRHLRMILDNVELEESKCLFETNYSHVYFILYDTFIQAEANLKQKVHKAHREELDGSLWLLEKILCLLPELLARRWQCHSLSRIMAKLLHLGNSPKLRREGVRYFLLWYQTLGENAPGYVHAMYADLIPGLIVPQKGVVGPDTEFSASDFLTHPNMKADGGMASVFHDNAFSHPVQSSEVVALLPPSSSEKSAPPDPRDGLEVLLNSMVHTAACLRWRDNRAQKDHRAFAFLLQRFMDVFLPVFSPNFDVSCSIYNPRLDLPVMRSINKKEEVMASCVVVLINWVSRFTHERLLSHRLDCTLHIEDVDQVRLHGYQQGLIVRDVLYVNRENINFVHEVYRQAFLLNFTSKPQIEAIRTAIAVYRDWMTGETPPPFLLEPNDDPPPPSNAGGTPRSQRLRTPSYVGAIAGSKDQLVVRAGRQNVLQVFVTNAANVFLVNTANLNICFPTRSRSYRSTPLEEQTEICKKVLNVYRTMVMNTEMDTRTWEQLLMVLLQVTSIVLHQNQHTLPSGTNKSATLGGILGSAIFQTLIVTWIRAHTKVPVNVLLWEKFLNVLQSLTHREELIIEWNKTIQTLTRVFSRYTYGINLLDLPLDRVAESRAEKRRRIGSVWQGSGSNSAANGGSAASAAISQNRQRESLAESSSSRSEETSSQVPLPNHPRPHHQHTQSQGGTGHGTRPIPLTPMLSRSYSEGSLASAARSSRIRRRRAATPKPKALQPSQLAENRINPQDLRRAMSLDSLARKGDAEETDSYQEGDNESGAGSRSPSPTASSGIEGGSIKDAQLQIDASLDDANSGSYGSGSNSGSISGRRCIILGGSAEGWHPDSTSIMWKRMLGALGDVNRIPKADLHAQVFMHLLEMTQNLIKIKQNQGISTDNQNTQPMPPLVPPIGIVAPWCYGSLSLDRSFKKGKLWALQLLCSLAIQGAVNMQQLPLFYHALHQLLTGEDRDLIYAILKHLEGPRLLSLLLPGHTLLLLDLVHASAILLTSLEVSRSTPRAEVAALLGSLLCYPSSLLTRSVLQPTPQKFELMECSDLQDHILNIVLRCARREPSAKARCIALSQLGQWLLMRLSQPLPASNSGRANLFQQAVPHHKDVHPKASSVYNPRIKEVLQVLLQALQFKHHTIAIVAVDSLKLCAERGRQLAAIERVPQLIITAICKALEIQSVTKPKDSDKVVLTSLMLCLGEFCMAIPAPIMLTPFNEQGDTLVLQVLRVLLQVASGAPRHERVKLTADDDFDMHIAHDDLQGDGRLPEATYQTSETIQKCITAIKLCAKAVSMHLVTHIGHFPMGIGASRLSSMVEEQDDIGNAAYGGQVETRRDSVELPSVVSAQNMQLFMLNSGLVASFIELPTLKLPGGGITAGLVTADKQVRVLMRDLNGKACWDASILYSEPRNAEEPPKTTPKIQHSQPLDSMATSMVTHTPSPRHTLRHRPAGVLPLAKDMAPDLDQLDDMLAYIGHTSPECVAPTVSQLNAPTASPLSGNQEAQAISVILNQRLLEQEFVTHSTQAPSPALRHASSNSSLQQPDQRSLHSTTASFDSLPTRTEMPFQYCRLLFSHLGLAGWERRSRTHLLQRSEKLMRELRNVDLQKCRETHKMAVIYVAAGQEDKGSILRNTSGSSTYEMFVSALGWEIDLETHNGFLGGLPRQGCGATAPYYATPFLEVVYHVATRMPSDSSEAMLLKTRHLGNDEVHIVWSEHNRDYRRDILPTEFCDVLIVVYPLRNGLFRVTVNRKPEVPWFGPLANESVVSGACLATLIRATAINASRTKRAALPLYQQFYEERNRSLDSVSSRYKESTTFEDFASRIYNPMPLSTLGTLRESNASSSAAPLASALLDHNRASVKGWVQASIDSGPIMGIAPSASAGSTAAMEAATGMSSASPRGPRKLGAPFKSVTKKHSLQHIAVGGGAGAGGDTPPESPTLPQRRFK</sequence>
<keyword id="KW-0025">Alternative splicing</keyword>
<keyword id="KW-0343">GTPase activation</keyword>
<keyword id="KW-0597">Phosphoprotein</keyword>
<keyword id="KW-1185">Reference proteome</keyword>
<reference key="1">
    <citation type="journal article" date="2000" name="Science">
        <title>The genome sequence of Drosophila melanogaster.</title>
        <authorList>
            <person name="Adams M.D."/>
            <person name="Celniker S.E."/>
            <person name="Holt R.A."/>
            <person name="Evans C.A."/>
            <person name="Gocayne J.D."/>
            <person name="Amanatides P.G."/>
            <person name="Scherer S.E."/>
            <person name="Li P.W."/>
            <person name="Hoskins R.A."/>
            <person name="Galle R.F."/>
            <person name="George R.A."/>
            <person name="Lewis S.E."/>
            <person name="Richards S."/>
            <person name="Ashburner M."/>
            <person name="Henderson S.N."/>
            <person name="Sutton G.G."/>
            <person name="Wortman J.R."/>
            <person name="Yandell M.D."/>
            <person name="Zhang Q."/>
            <person name="Chen L.X."/>
            <person name="Brandon R.C."/>
            <person name="Rogers Y.-H.C."/>
            <person name="Blazej R.G."/>
            <person name="Champe M."/>
            <person name="Pfeiffer B.D."/>
            <person name="Wan K.H."/>
            <person name="Doyle C."/>
            <person name="Baxter E.G."/>
            <person name="Helt G."/>
            <person name="Nelson C.R."/>
            <person name="Miklos G.L.G."/>
            <person name="Abril J.F."/>
            <person name="Agbayani A."/>
            <person name="An H.-J."/>
            <person name="Andrews-Pfannkoch C."/>
            <person name="Baldwin D."/>
            <person name="Ballew R.M."/>
            <person name="Basu A."/>
            <person name="Baxendale J."/>
            <person name="Bayraktaroglu L."/>
            <person name="Beasley E.M."/>
            <person name="Beeson K.Y."/>
            <person name="Benos P.V."/>
            <person name="Berman B.P."/>
            <person name="Bhandari D."/>
            <person name="Bolshakov S."/>
            <person name="Borkova D."/>
            <person name="Botchan M.R."/>
            <person name="Bouck J."/>
            <person name="Brokstein P."/>
            <person name="Brottier P."/>
            <person name="Burtis K.C."/>
            <person name="Busam D.A."/>
            <person name="Butler H."/>
            <person name="Cadieu E."/>
            <person name="Center A."/>
            <person name="Chandra I."/>
            <person name="Cherry J.M."/>
            <person name="Cawley S."/>
            <person name="Dahlke C."/>
            <person name="Davenport L.B."/>
            <person name="Davies P."/>
            <person name="de Pablos B."/>
            <person name="Delcher A."/>
            <person name="Deng Z."/>
            <person name="Mays A.D."/>
            <person name="Dew I."/>
            <person name="Dietz S.M."/>
            <person name="Dodson K."/>
            <person name="Doup L.E."/>
            <person name="Downes M."/>
            <person name="Dugan-Rocha S."/>
            <person name="Dunkov B.C."/>
            <person name="Dunn P."/>
            <person name="Durbin K.J."/>
            <person name="Evangelista C.C."/>
            <person name="Ferraz C."/>
            <person name="Ferriera S."/>
            <person name="Fleischmann W."/>
            <person name="Fosler C."/>
            <person name="Gabrielian A.E."/>
            <person name="Garg N.S."/>
            <person name="Gelbart W.M."/>
            <person name="Glasser K."/>
            <person name="Glodek A."/>
            <person name="Gong F."/>
            <person name="Gorrell J.H."/>
            <person name="Gu Z."/>
            <person name="Guan P."/>
            <person name="Harris M."/>
            <person name="Harris N.L."/>
            <person name="Harvey D.A."/>
            <person name="Heiman T.J."/>
            <person name="Hernandez J.R."/>
            <person name="Houck J."/>
            <person name="Hostin D."/>
            <person name="Houston K.A."/>
            <person name="Howland T.J."/>
            <person name="Wei M.-H."/>
            <person name="Ibegwam C."/>
            <person name="Jalali M."/>
            <person name="Kalush F."/>
            <person name="Karpen G.H."/>
            <person name="Ke Z."/>
            <person name="Kennison J.A."/>
            <person name="Ketchum K.A."/>
            <person name="Kimmel B.E."/>
            <person name="Kodira C.D."/>
            <person name="Kraft C.L."/>
            <person name="Kravitz S."/>
            <person name="Kulp D."/>
            <person name="Lai Z."/>
            <person name="Lasko P."/>
            <person name="Lei Y."/>
            <person name="Levitsky A.A."/>
            <person name="Li J.H."/>
            <person name="Li Z."/>
            <person name="Liang Y."/>
            <person name="Lin X."/>
            <person name="Liu X."/>
            <person name="Mattei B."/>
            <person name="McIntosh T.C."/>
            <person name="McLeod M.P."/>
            <person name="McPherson D."/>
            <person name="Merkulov G."/>
            <person name="Milshina N.V."/>
            <person name="Mobarry C."/>
            <person name="Morris J."/>
            <person name="Moshrefi A."/>
            <person name="Mount S.M."/>
            <person name="Moy M."/>
            <person name="Murphy B."/>
            <person name="Murphy L."/>
            <person name="Muzny D.M."/>
            <person name="Nelson D.L."/>
            <person name="Nelson D.R."/>
            <person name="Nelson K.A."/>
            <person name="Nixon K."/>
            <person name="Nusskern D.R."/>
            <person name="Pacleb J.M."/>
            <person name="Palazzolo M."/>
            <person name="Pittman G.S."/>
            <person name="Pan S."/>
            <person name="Pollard J."/>
            <person name="Puri V."/>
            <person name="Reese M.G."/>
            <person name="Reinert K."/>
            <person name="Remington K."/>
            <person name="Saunders R.D.C."/>
            <person name="Scheeler F."/>
            <person name="Shen H."/>
            <person name="Shue B.C."/>
            <person name="Siden-Kiamos I."/>
            <person name="Simpson M."/>
            <person name="Skupski M.P."/>
            <person name="Smith T.J."/>
            <person name="Spier E."/>
            <person name="Spradling A.C."/>
            <person name="Stapleton M."/>
            <person name="Strong R."/>
            <person name="Sun E."/>
            <person name="Svirskas R."/>
            <person name="Tector C."/>
            <person name="Turner R."/>
            <person name="Venter E."/>
            <person name="Wang A.H."/>
            <person name="Wang X."/>
            <person name="Wang Z.-Y."/>
            <person name="Wassarman D.A."/>
            <person name="Weinstock G.M."/>
            <person name="Weissenbach J."/>
            <person name="Williams S.M."/>
            <person name="Woodage T."/>
            <person name="Worley K.C."/>
            <person name="Wu D."/>
            <person name="Yang S."/>
            <person name="Yao Q.A."/>
            <person name="Ye J."/>
            <person name="Yeh R.-F."/>
            <person name="Zaveri J.S."/>
            <person name="Zhan M."/>
            <person name="Zhang G."/>
            <person name="Zhao Q."/>
            <person name="Zheng L."/>
            <person name="Zheng X.H."/>
            <person name="Zhong F.N."/>
            <person name="Zhong W."/>
            <person name="Zhou X."/>
            <person name="Zhu S.C."/>
            <person name="Zhu X."/>
            <person name="Smith H.O."/>
            <person name="Gibbs R.A."/>
            <person name="Myers E.W."/>
            <person name="Rubin G.M."/>
            <person name="Venter J.C."/>
        </authorList>
    </citation>
    <scope>NUCLEOTIDE SEQUENCE [LARGE SCALE GENOMIC DNA]</scope>
    <source>
        <strain>Berkeley</strain>
    </source>
</reference>
<reference key="2">
    <citation type="journal article" date="2002" name="Genome Biol.">
        <title>Annotation of the Drosophila melanogaster euchromatic genome: a systematic review.</title>
        <authorList>
            <person name="Misra S."/>
            <person name="Crosby M.A."/>
            <person name="Mungall C.J."/>
            <person name="Matthews B.B."/>
            <person name="Campbell K.S."/>
            <person name="Hradecky P."/>
            <person name="Huang Y."/>
            <person name="Kaminker J.S."/>
            <person name="Millburn G.H."/>
            <person name="Prochnik S.E."/>
            <person name="Smith C.D."/>
            <person name="Tupy J.L."/>
            <person name="Whitfield E.J."/>
            <person name="Bayraktaroglu L."/>
            <person name="Berman B.P."/>
            <person name="Bettencourt B.R."/>
            <person name="Celniker S.E."/>
            <person name="de Grey A.D.N.J."/>
            <person name="Drysdale R.A."/>
            <person name="Harris N.L."/>
            <person name="Richter J."/>
            <person name="Russo S."/>
            <person name="Schroeder A.J."/>
            <person name="Shu S.Q."/>
            <person name="Stapleton M."/>
            <person name="Yamada C."/>
            <person name="Ashburner M."/>
            <person name="Gelbart W.M."/>
            <person name="Rubin G.M."/>
            <person name="Lewis S.E."/>
        </authorList>
    </citation>
    <scope>GENOME REANNOTATION</scope>
    <source>
        <strain>Berkeley</strain>
    </source>
</reference>
<reference key="3">
    <citation type="submission" date="2006-10" db="EMBL/GenBank/DDBJ databases">
        <authorList>
            <person name="Stapleton M."/>
            <person name="Carlson J.W."/>
            <person name="Frise E."/>
            <person name="Kapadia B."/>
            <person name="Park S."/>
            <person name="Wan K.H."/>
            <person name="Yu C."/>
            <person name="Celniker S.E."/>
        </authorList>
    </citation>
    <scope>NUCLEOTIDE SEQUENCE [LARGE SCALE MRNA] OF 1-789 (ISOFORM 2)</scope>
    <source>
        <strain>Berkeley</strain>
    </source>
</reference>
<reference key="4">
    <citation type="journal article" date="2007" name="Mol. Biosyst.">
        <title>An integrated chemical, mass spectrometric and computational strategy for (quantitative) phosphoproteomics: application to Drosophila melanogaster Kc167 cells.</title>
        <authorList>
            <person name="Bodenmiller B."/>
            <person name="Mueller L.N."/>
            <person name="Pedrioli P.G.A."/>
            <person name="Pflieger D."/>
            <person name="Juenger M.A."/>
            <person name="Eng J.K."/>
            <person name="Aebersold R."/>
            <person name="Tao W.A."/>
        </authorList>
    </citation>
    <scope>PHOSPHORYLATION [LARGE SCALE ANALYSIS] AT TYR-980</scope>
    <scope>IDENTIFICATION BY MASS SPECTROMETRY</scope>
</reference>
<reference key="5">
    <citation type="journal article" date="2008" name="J. Proteome Res.">
        <title>Phosphoproteome analysis of Drosophila melanogaster embryos.</title>
        <authorList>
            <person name="Zhai B."/>
            <person name="Villen J."/>
            <person name="Beausoleil S.A."/>
            <person name="Mintseris J."/>
            <person name="Gygi S.P."/>
        </authorList>
    </citation>
    <scope>PHOSPHORYLATION [LARGE SCALE ANALYSIS] AT SER-718; SER-764; SER-767; SER-787; SER-791; SER-793; SER-795; SER-1551; THR-1945 AND SER-1949</scope>
    <scope>IDENTIFICATION BY MASS SPECTROMETRY</scope>
    <source>
        <tissue>Embryo</tissue>
    </source>
</reference>
<name>Y5521_DROME</name>
<dbReference type="EMBL" id="AE014297">
    <property type="protein sequence ID" value="AAF56644.2"/>
    <property type="molecule type" value="Genomic_DNA"/>
</dbReference>
<dbReference type="EMBL" id="BT029103">
    <property type="protein sequence ID" value="ABJ17036.1"/>
    <property type="status" value="ALT_FRAME"/>
    <property type="molecule type" value="mRNA"/>
</dbReference>
<dbReference type="RefSeq" id="NP_001163748.1">
    <molecule id="Q9VB98-2"/>
    <property type="nucleotide sequence ID" value="NM_001170277.2"/>
</dbReference>
<dbReference type="RefSeq" id="NP_651516.1">
    <molecule id="Q9VB98-1"/>
    <property type="nucleotide sequence ID" value="NM_143259.3"/>
</dbReference>
<dbReference type="SMR" id="Q9VB98"/>
<dbReference type="BioGRID" id="68132">
    <property type="interactions" value="2"/>
</dbReference>
<dbReference type="FunCoup" id="Q9VB98">
    <property type="interactions" value="1121"/>
</dbReference>
<dbReference type="IntAct" id="Q9VB98">
    <property type="interactions" value="6"/>
</dbReference>
<dbReference type="STRING" id="7227.FBpp0290357"/>
<dbReference type="GlyGen" id="Q9VB98">
    <property type="glycosylation" value="4 sites"/>
</dbReference>
<dbReference type="iPTMnet" id="Q9VB98"/>
<dbReference type="PaxDb" id="7227-FBpp0290357"/>
<dbReference type="EnsemblMetazoa" id="FBtr0085069">
    <molecule id="Q9VB98-1"/>
    <property type="protein sequence ID" value="FBpp0084441"/>
    <property type="gene ID" value="FBgn0039466"/>
</dbReference>
<dbReference type="EnsemblMetazoa" id="FBtr0301134">
    <molecule id="Q9VB98-2"/>
    <property type="protein sequence ID" value="FBpp0290357"/>
    <property type="gene ID" value="FBgn0039466"/>
</dbReference>
<dbReference type="GeneID" id="43242"/>
<dbReference type="KEGG" id="dme:Dmel_CG5521"/>
<dbReference type="UCSC" id="CG5521-RA">
    <molecule id="Q9VB98-1"/>
    <property type="organism name" value="d. melanogaster"/>
</dbReference>
<dbReference type="AGR" id="FB:FBgn0039466"/>
<dbReference type="FlyBase" id="FBgn0039466">
    <property type="gene designation" value="CG5521"/>
</dbReference>
<dbReference type="VEuPathDB" id="VectorBase:FBgn0039466"/>
<dbReference type="eggNOG" id="KOG3686">
    <property type="taxonomic scope" value="Eukaryota"/>
</dbReference>
<dbReference type="GeneTree" id="ENSGT00950000183139"/>
<dbReference type="HOGENOM" id="CLU_001676_0_0_1"/>
<dbReference type="InParanoid" id="Q9VB98"/>
<dbReference type="OMA" id="ELMRNGW"/>
<dbReference type="OrthoDB" id="19311at2759"/>
<dbReference type="PhylomeDB" id="Q9VB98"/>
<dbReference type="Reactome" id="R-DME-9013407">
    <property type="pathway name" value="RHOH GTPase cycle"/>
</dbReference>
<dbReference type="BioGRID-ORCS" id="43242">
    <property type="hits" value="0 hits in 3 CRISPR screens"/>
</dbReference>
<dbReference type="ChiTaRS" id="CG5521">
    <property type="organism name" value="fly"/>
</dbReference>
<dbReference type="GenomeRNAi" id="43242"/>
<dbReference type="PRO" id="PR:Q9VB98"/>
<dbReference type="Proteomes" id="UP000000803">
    <property type="component" value="Chromosome 3R"/>
</dbReference>
<dbReference type="Bgee" id="FBgn0039466">
    <property type="expression patterns" value="Expressed in muscle cell in digestive tract and 198 other cell types or tissues"/>
</dbReference>
<dbReference type="ExpressionAtlas" id="Q9VB98">
    <property type="expression patterns" value="baseline and differential"/>
</dbReference>
<dbReference type="GO" id="GO:0005737">
    <property type="term" value="C:cytoplasm"/>
    <property type="evidence" value="ECO:0000318"/>
    <property type="project" value="GO_Central"/>
</dbReference>
<dbReference type="GO" id="GO:0005634">
    <property type="term" value="C:nucleus"/>
    <property type="evidence" value="ECO:0007669"/>
    <property type="project" value="InterPro"/>
</dbReference>
<dbReference type="GO" id="GO:0005096">
    <property type="term" value="F:GTPase activator activity"/>
    <property type="evidence" value="ECO:0000250"/>
    <property type="project" value="FlyBase"/>
</dbReference>
<dbReference type="GO" id="GO:0051056">
    <property type="term" value="P:regulation of small GTPase mediated signal transduction"/>
    <property type="evidence" value="ECO:0007669"/>
    <property type="project" value="InterPro"/>
</dbReference>
<dbReference type="FunFam" id="3.40.50.11210:FF:000001">
    <property type="entry name" value="Ral GTPase-activating protein subunit alpha-1 isoform 1"/>
    <property type="match status" value="1"/>
</dbReference>
<dbReference type="Gene3D" id="3.40.50.11210">
    <property type="entry name" value="Rap/Ran-GAP"/>
    <property type="match status" value="1"/>
</dbReference>
<dbReference type="InterPro" id="IPR016024">
    <property type="entry name" value="ARM-type_fold"/>
</dbReference>
<dbReference type="InterPro" id="IPR035974">
    <property type="entry name" value="Rap/Ran-GAP_sf"/>
</dbReference>
<dbReference type="InterPro" id="IPR000331">
    <property type="entry name" value="Rap/Ran_GAP_dom"/>
</dbReference>
<dbReference type="InterPro" id="IPR046859">
    <property type="entry name" value="RGPA/RALGAPB_N"/>
</dbReference>
<dbReference type="InterPro" id="IPR027107">
    <property type="entry name" value="Tuberin/Ral-act_asu"/>
</dbReference>
<dbReference type="PANTHER" id="PTHR10063:SF11">
    <property type="entry name" value="RHO GTPASE-ACTIVATING PROTEIN CG5521-RELATED"/>
    <property type="match status" value="1"/>
</dbReference>
<dbReference type="PANTHER" id="PTHR10063">
    <property type="entry name" value="TUBERIN"/>
    <property type="match status" value="1"/>
</dbReference>
<dbReference type="Pfam" id="PF20412">
    <property type="entry name" value="RALGAPB_N"/>
    <property type="match status" value="1"/>
</dbReference>
<dbReference type="Pfam" id="PF02145">
    <property type="entry name" value="Rap_GAP"/>
    <property type="match status" value="1"/>
</dbReference>
<dbReference type="SUPFAM" id="SSF48371">
    <property type="entry name" value="ARM repeat"/>
    <property type="match status" value="1"/>
</dbReference>
<dbReference type="SUPFAM" id="SSF111347">
    <property type="entry name" value="Rap/Ran-GAP"/>
    <property type="match status" value="1"/>
</dbReference>
<dbReference type="PROSITE" id="PS50085">
    <property type="entry name" value="RAPGAP"/>
    <property type="match status" value="1"/>
</dbReference>
<evidence type="ECO:0000255" key="1">
    <source>
        <dbReference type="PROSITE-ProRule" id="PRU00165"/>
    </source>
</evidence>
<evidence type="ECO:0000256" key="2">
    <source>
        <dbReference type="SAM" id="MobiDB-lite"/>
    </source>
</evidence>
<evidence type="ECO:0000269" key="3">
    <source>
    </source>
</evidence>
<evidence type="ECO:0000269" key="4">
    <source>
    </source>
</evidence>
<evidence type="ECO:0000303" key="5">
    <source ref="3"/>
</evidence>
<evidence type="ECO:0000305" key="6"/>
<comment type="alternative products">
    <event type="alternative splicing"/>
    <isoform>
        <id>Q9VB98-1</id>
        <name>1</name>
        <sequence type="displayed"/>
    </isoform>
    <isoform>
        <id>Q9VB98-2</id>
        <name>2</name>
        <sequence type="described" ref="VSP_037212"/>
    </isoform>
</comment>
<comment type="sequence caution" evidence="6">
    <conflict type="frameshift">
        <sequence resource="EMBL-CDS" id="ABJ17036"/>
    </conflict>
</comment>